<proteinExistence type="evidence at transcript level"/>
<gene>
    <name evidence="4" type="primary">STT3A</name>
</gene>
<accession>Q2KJI2</accession>
<comment type="function">
    <text evidence="4">Catalytic subunit of the oligosaccharyl transferase (OST) complex that catalyzes the initial transfer of a defined glycan (Glc(3)Man(9)GlcNAc(2) in eukaryotes) from the lipid carrier dolichol-pyrophosphate to an asparagine residue within an Asn-X-Ser/Thr consensus motif in nascent polypeptide chains, the first step in protein N-glycosylation. N-glycosylation occurs cotranslationally and the complex associates with the Sec61 complex at the channel-forming translocon complex that mediates protein translocation across the endoplasmic reticulum (ER). All subunits are required for a maximal enzyme activity. This subunit contains the active site and the acceptor peptide and donor lipid-linked oligosaccharide (LLO) binding pockets. STT3A is present in the majority of OST complexes and mediates cotranslational N-glycosylation of most sites on target proteins, while STT3B-containing complexes are required for efficient post-translational glycosylation and mediate glycosylation of sites that have been skipped by STT3A. STT3A-containing OST-A complex is also required to prevent hyperglycosylation of some target proteins by preventing glycosylation of facultative sites before folding of target proteins is completed.</text>
</comment>
<comment type="catalytic activity">
    <reaction evidence="3">
        <text>a di-trans,poly-cis-dolichyl diphosphooligosaccharide + L-asparaginyl-[protein] = N(4)-(oligosaccharide-(1-&gt;4)-N-acetyl-beta-D-glucosaminyl-(1-&gt;4)-N-acetyl-beta-D-glucosaminyl)-L-asparaginyl-[protein] + a di-trans,poly-cis-dolichyl diphosphate + H(+)</text>
        <dbReference type="Rhea" id="RHEA:22980"/>
        <dbReference type="Rhea" id="RHEA-COMP:12804"/>
        <dbReference type="Rhea" id="RHEA-COMP:12805"/>
        <dbReference type="Rhea" id="RHEA-COMP:19506"/>
        <dbReference type="Rhea" id="RHEA-COMP:19509"/>
        <dbReference type="ChEBI" id="CHEBI:15378"/>
        <dbReference type="ChEBI" id="CHEBI:50347"/>
        <dbReference type="ChEBI" id="CHEBI:57497"/>
        <dbReference type="ChEBI" id="CHEBI:57570"/>
        <dbReference type="ChEBI" id="CHEBI:132529"/>
        <dbReference type="EC" id="2.4.99.18"/>
    </reaction>
</comment>
<comment type="cofactor">
    <cofactor evidence="4">
        <name>Mg(2+)</name>
        <dbReference type="ChEBI" id="CHEBI:18420"/>
    </cofactor>
    <cofactor evidence="1">
        <name>Mn(2+)</name>
        <dbReference type="ChEBI" id="CHEBI:29035"/>
    </cofactor>
</comment>
<comment type="pathway">
    <text evidence="4">Protein modification; protein glycosylation.</text>
</comment>
<comment type="subunit">
    <text evidence="2 4">Component of the oligosaccharyltransferase (OST) complex. There are 2 OST complexes, OST-A and OST-B, which contain STT3A or STT3B as catalytic subunit, respectively. OST-A and OST-B contain common core subunits RPN1, RPN2, OST48, OST4, DAD1 and TMEM258, and OST-A contains DC2/OSTC and KRTCAP2/KCP2 specific accessory subunits (By similarity). OST-A complex assembly occurs through the formation of 3 subcomplexes. Subcomplex 1 contains RPN1 and TMEM258, subcomplex 2 contains the OST-A-specific subunits STT3A, DC2/OSTC, and KCP2 as well as the core subunit OST4, and subcomplex 3 contains RPN2, DAD1, and OST48. The OST-A complex can form stable complexes with the Sec61 complex or with both the Sec61 and TRAP complexes (By similarity).</text>
</comment>
<comment type="subcellular location">
    <subcellularLocation>
        <location evidence="5">Endoplasmic reticulum membrane</location>
        <topology evidence="5">Multi-pass membrane protein</topology>
    </subcellularLocation>
</comment>
<comment type="domain">
    <text evidence="3">Despite low primary sequence conservation between eukaryotic catalytic subunits and bacterial and archaeal single subunit OSTs (ssOST), structural comparison revealed several common motifs at spatially equivalent positions, like the DXD motif 1 on the external loop 1 and the DXD motif 2 on the external loop 2 involved in binding of the metal ion cofactor and the carboxamide group of the acceptor asparagine, the conserved Glu residue of the TIXE/SVSE motif on the external loop 5 involved in catalysis, as well as the WWDYG and the DK/MI motifs in the globular domain that define the binding pocket for the +2 Ser/Thr of the acceptor sequon. In bacterial ssOSTs, an Arg residue was found to interact with a negatively charged side chain at the -2 position of the sequon. This Arg is conserved in bacterial enzymes and correlates with an extended sequon requirement (Asp-X-Asn-X-Ser/Thr) for bacterial N-glycosylation.</text>
</comment>
<comment type="similarity">
    <text evidence="9">Belongs to the STT3 family.</text>
</comment>
<keyword id="KW-0256">Endoplasmic reticulum</keyword>
<keyword id="KW-0325">Glycoprotein</keyword>
<keyword id="KW-0328">Glycosyltransferase</keyword>
<keyword id="KW-0460">Magnesium</keyword>
<keyword id="KW-0464">Manganese</keyword>
<keyword id="KW-0472">Membrane</keyword>
<keyword id="KW-0479">Metal-binding</keyword>
<keyword id="KW-1185">Reference proteome</keyword>
<keyword id="KW-0808">Transferase</keyword>
<keyword id="KW-0812">Transmembrane</keyword>
<keyword id="KW-1133">Transmembrane helix</keyword>
<name>STT3A_BOVIN</name>
<protein>
    <recommendedName>
        <fullName evidence="4">Dolichyl-diphosphooligosaccharide--protein glycosyltransferase subunit STT3A</fullName>
        <shortName>Oligosaccharyl transferase subunit STT3A</shortName>
        <shortName>STT3-A</shortName>
        <ecNumber>2.4.99.18</ecNumber>
    </recommendedName>
</protein>
<sequence>MTKLGFLRLSYEKQDTLLKLLILSMAAVLSFSTRLFAVLRFESVIHEFDPYFNYRTTRFLAEEGFYKFHNWFDDRAWYPLGRIIGGTIYPGLMITSAAIYHVLHFFHITIDIRNVCVFLAPLFSSFTTIVTYHLTKELKDAGAGLLAAAMIAVVPGYISRSVAGSYDNEGIAIFCMLLTYYMWIKAVKTGSIYWAAKCALAYFYMVSSWGGYVFLINLIPLHVLVLMLTGRFSHRIYVAYCTVYCLGTILSMQISFVGFQPVLSSEHMAAFGVFGLCQIHAFVDYLRSKLNPQQFEVLFRSVISLVGFVLLTIGALLMLTGKISPWTGRFYSLLDPSYAKNNIPIIASVSEHQPTTWSSYYFDLQLLVFMFPVGLYYCFSNLSDARIFIIMYGVTSMYFSAVMVRLMLVLAPVMCILSGIGVSQVLSTYMKNLDISRQDKKSKKQQDSTYPIKNEVASGMILVMAFFLITYTFHSTWVTSEAYSSPSIVLSARGGDGSRIIFDDFREAYYWLRHNTPEDAKVMSWWDYGYQITAMANRTILVDNNTWNNTHISRVGQAMASTEEKAYEIMRELDVSYVLVIFGGLTGYSSDDINKFLWMVRIGGSTDTGKHIKEHDYYTPTGEFRVDREGSPVLLNCLMYKMCYYRFGQVYTEAKRPLGYDRVRNAEIGNKDFELDVLEEAYTTEHWLVRIYKVKDLDNRGLSRT</sequence>
<evidence type="ECO:0000250" key="1">
    <source>
        <dbReference type="UniProtKB" id="B9KDD4"/>
    </source>
</evidence>
<evidence type="ECO:0000250" key="2">
    <source>
        <dbReference type="UniProtKB" id="F1PJP5"/>
    </source>
</evidence>
<evidence type="ECO:0000250" key="3">
    <source>
        <dbReference type="UniProtKB" id="P39007"/>
    </source>
</evidence>
<evidence type="ECO:0000250" key="4">
    <source>
        <dbReference type="UniProtKB" id="P46977"/>
    </source>
</evidence>
<evidence type="ECO:0000250" key="5">
    <source>
        <dbReference type="UniProtKB" id="P46978"/>
    </source>
</evidence>
<evidence type="ECO:0000250" key="6">
    <source>
        <dbReference type="UniProtKB" id="Q5HTX9"/>
    </source>
</evidence>
<evidence type="ECO:0000255" key="7"/>
<evidence type="ECO:0000255" key="8">
    <source>
        <dbReference type="PROSITE-ProRule" id="PRU00498"/>
    </source>
</evidence>
<evidence type="ECO:0000305" key="9"/>
<dbReference type="EC" id="2.4.99.18"/>
<dbReference type="EMBL" id="BC105328">
    <property type="protein sequence ID" value="AAI05329.1"/>
    <property type="molecule type" value="mRNA"/>
</dbReference>
<dbReference type="RefSeq" id="NP_001039445.1">
    <property type="nucleotide sequence ID" value="NM_001045980.2"/>
</dbReference>
<dbReference type="RefSeq" id="XP_005226848.1">
    <property type="nucleotide sequence ID" value="XM_005226791.5"/>
</dbReference>
<dbReference type="RefSeq" id="XP_015316673.1">
    <property type="nucleotide sequence ID" value="XM_015461187.3"/>
</dbReference>
<dbReference type="RefSeq" id="XP_059738799.1">
    <property type="nucleotide sequence ID" value="XM_059882816.1"/>
</dbReference>
<dbReference type="SMR" id="Q2KJI2"/>
<dbReference type="FunCoup" id="Q2KJI2">
    <property type="interactions" value="3159"/>
</dbReference>
<dbReference type="STRING" id="9913.ENSBTAP00000009477"/>
<dbReference type="CAZy" id="GT66">
    <property type="family name" value="Glycosyltransferase Family 66"/>
</dbReference>
<dbReference type="GlyCosmos" id="Q2KJI2">
    <property type="glycosylation" value="3 sites, No reported glycans"/>
</dbReference>
<dbReference type="GlyGen" id="Q2KJI2">
    <property type="glycosylation" value="3 sites"/>
</dbReference>
<dbReference type="PaxDb" id="9913-ENSBTAP00000009477"/>
<dbReference type="PeptideAtlas" id="Q2KJI2"/>
<dbReference type="GeneID" id="507815"/>
<dbReference type="KEGG" id="bta:507815"/>
<dbReference type="CTD" id="3703"/>
<dbReference type="VEuPathDB" id="HostDB:ENSBTAG00000007203"/>
<dbReference type="eggNOG" id="KOG2292">
    <property type="taxonomic scope" value="Eukaryota"/>
</dbReference>
<dbReference type="HOGENOM" id="CLU_009279_1_0_1"/>
<dbReference type="InParanoid" id="Q2KJI2"/>
<dbReference type="OMA" id="TWYAIGT"/>
<dbReference type="OrthoDB" id="10261066at2759"/>
<dbReference type="TreeFam" id="TF300822"/>
<dbReference type="UniPathway" id="UPA00378"/>
<dbReference type="Proteomes" id="UP000009136">
    <property type="component" value="Chromosome 29"/>
</dbReference>
<dbReference type="Bgee" id="ENSBTAG00000007203">
    <property type="expression patterns" value="Expressed in prostate gland and 104 other cell types or tissues"/>
</dbReference>
<dbReference type="GO" id="GO:0008250">
    <property type="term" value="C:oligosaccharyltransferase complex"/>
    <property type="evidence" value="ECO:0000250"/>
    <property type="project" value="UniProtKB"/>
</dbReference>
<dbReference type="GO" id="GO:0004579">
    <property type="term" value="F:dolichyl-diphosphooligosaccharide-protein glycotransferase activity"/>
    <property type="evidence" value="ECO:0000250"/>
    <property type="project" value="UniProtKB"/>
</dbReference>
<dbReference type="GO" id="GO:0046872">
    <property type="term" value="F:metal ion binding"/>
    <property type="evidence" value="ECO:0007669"/>
    <property type="project" value="UniProtKB-KW"/>
</dbReference>
<dbReference type="GO" id="GO:0043686">
    <property type="term" value="P:co-translational protein modification"/>
    <property type="evidence" value="ECO:0000250"/>
    <property type="project" value="UniProtKB"/>
</dbReference>
<dbReference type="GO" id="GO:0043687">
    <property type="term" value="P:post-translational protein modification"/>
    <property type="evidence" value="ECO:0000318"/>
    <property type="project" value="GO_Central"/>
</dbReference>
<dbReference type="GO" id="GO:0018279">
    <property type="term" value="P:protein N-linked glycosylation via asparagine"/>
    <property type="evidence" value="ECO:0000250"/>
    <property type="project" value="UniProtKB"/>
</dbReference>
<dbReference type="FunFam" id="3.40.50.12610:FF:000002">
    <property type="entry name" value="dolichyl-diphosphooligosaccharide--protein glycosyltransferase subunit STT3A"/>
    <property type="match status" value="1"/>
</dbReference>
<dbReference type="Gene3D" id="3.40.50.12610">
    <property type="match status" value="1"/>
</dbReference>
<dbReference type="InterPro" id="IPR054479">
    <property type="entry name" value="AglB-like_core"/>
</dbReference>
<dbReference type="InterPro" id="IPR003674">
    <property type="entry name" value="Oligo_trans_STT3"/>
</dbReference>
<dbReference type="InterPro" id="IPR048307">
    <property type="entry name" value="STT3_N"/>
</dbReference>
<dbReference type="PANTHER" id="PTHR13872">
    <property type="entry name" value="DOLICHYL-DIPHOSPHOOLIGOSACCHARIDE--PROTEIN GLYCOSYLTRANSFERASE SUBUNIT"/>
    <property type="match status" value="1"/>
</dbReference>
<dbReference type="PANTHER" id="PTHR13872:SF43">
    <property type="entry name" value="DOLICHYL-DIPHOSPHOOLIGOSACCHARIDE--PROTEIN GLYCOSYLTRANSFERASE SUBUNIT STT3A"/>
    <property type="match status" value="1"/>
</dbReference>
<dbReference type="Pfam" id="PF22627">
    <property type="entry name" value="AglB_core-like"/>
    <property type="match status" value="1"/>
</dbReference>
<dbReference type="Pfam" id="PF02516">
    <property type="entry name" value="STT3"/>
    <property type="match status" value="1"/>
</dbReference>
<organism>
    <name type="scientific">Bos taurus</name>
    <name type="common">Bovine</name>
    <dbReference type="NCBI Taxonomy" id="9913"/>
    <lineage>
        <taxon>Eukaryota</taxon>
        <taxon>Metazoa</taxon>
        <taxon>Chordata</taxon>
        <taxon>Craniata</taxon>
        <taxon>Vertebrata</taxon>
        <taxon>Euteleostomi</taxon>
        <taxon>Mammalia</taxon>
        <taxon>Eutheria</taxon>
        <taxon>Laurasiatheria</taxon>
        <taxon>Artiodactyla</taxon>
        <taxon>Ruminantia</taxon>
        <taxon>Pecora</taxon>
        <taxon>Bovidae</taxon>
        <taxon>Bovinae</taxon>
        <taxon>Bos</taxon>
    </lineage>
</organism>
<reference key="1">
    <citation type="submission" date="2005-09" db="EMBL/GenBank/DDBJ databases">
        <authorList>
            <consortium name="NIH - Mammalian Gene Collection (MGC) project"/>
        </authorList>
    </citation>
    <scope>NUCLEOTIDE SEQUENCE [LARGE SCALE MRNA]</scope>
    <source>
        <strain>Crossbred X Angus</strain>
        <tissue>Ileum</tissue>
    </source>
</reference>
<feature type="chain" id="PRO_0000326556" description="Dolichyl-diphosphooligosaccharide--protein glycosyltransferase subunit STT3A">
    <location>
        <begin position="1"/>
        <end position="705"/>
    </location>
</feature>
<feature type="topological domain" description="Cytoplasmic" evidence="9">
    <location>
        <begin position="1"/>
        <end position="17"/>
    </location>
</feature>
<feature type="transmembrane region" description="Helical" evidence="7">
    <location>
        <begin position="18"/>
        <end position="38"/>
    </location>
</feature>
<feature type="topological domain" description="Lumenal" evidence="9">
    <location>
        <begin position="39"/>
        <end position="119"/>
    </location>
</feature>
<feature type="transmembrane region" description="Helical" evidence="3">
    <location>
        <begin position="120"/>
        <end position="138"/>
    </location>
</feature>
<feature type="topological domain" description="Cytoplasmic" evidence="9">
    <location>
        <begin position="139"/>
        <end position="140"/>
    </location>
</feature>
<feature type="transmembrane region" description="Helical" evidence="3">
    <location>
        <begin position="141"/>
        <end position="158"/>
    </location>
</feature>
<feature type="topological domain" description="Lumenal" evidence="9">
    <location>
        <begin position="159"/>
        <end position="169"/>
    </location>
</feature>
<feature type="transmembrane region" description="Helical" evidence="3">
    <location>
        <begin position="170"/>
        <end position="189"/>
    </location>
</feature>
<feature type="topological domain" description="Cytoplasmic" evidence="9">
    <location>
        <begin position="190"/>
        <end position="191"/>
    </location>
</feature>
<feature type="transmembrane region" description="Helical" evidence="3">
    <location>
        <begin position="192"/>
        <end position="206"/>
    </location>
</feature>
<feature type="topological domain" description="Lumenal" evidence="9">
    <location>
        <begin position="207"/>
        <end position="211"/>
    </location>
</feature>
<feature type="transmembrane region" description="Helical" evidence="3">
    <location>
        <begin position="212"/>
        <end position="228"/>
    </location>
</feature>
<feature type="topological domain" description="Cytoplasmic" evidence="9">
    <location>
        <begin position="229"/>
        <end position="233"/>
    </location>
</feature>
<feature type="transmembrane region" description="Helical" evidence="3">
    <location>
        <begin position="234"/>
        <end position="259"/>
    </location>
</feature>
<feature type="topological domain" description="Lumenal" evidence="9">
    <location>
        <begin position="260"/>
        <end position="267"/>
    </location>
</feature>
<feature type="transmembrane region" description="Helical" evidence="3">
    <location>
        <begin position="268"/>
        <end position="287"/>
    </location>
</feature>
<feature type="topological domain" description="Cytoplasmic" evidence="9">
    <location>
        <begin position="288"/>
        <end position="300"/>
    </location>
</feature>
<feature type="transmembrane region" description="Helical" evidence="7">
    <location>
        <begin position="301"/>
        <end position="321"/>
    </location>
</feature>
<feature type="topological domain" description="Lumenal" evidence="9">
    <location>
        <begin position="322"/>
        <end position="356"/>
    </location>
</feature>
<feature type="transmembrane region" description="Helical" evidence="3">
    <location>
        <begin position="357"/>
        <end position="379"/>
    </location>
</feature>
<feature type="topological domain" description="Cytoplasmic" evidence="9">
    <location>
        <begin position="380"/>
        <end position="385"/>
    </location>
</feature>
<feature type="transmembrane region" description="Helical" evidence="3">
    <location>
        <begin position="386"/>
        <end position="402"/>
    </location>
</feature>
<feature type="topological domain" description="Lumenal" evidence="9">
    <location>
        <begin position="403"/>
        <end position="406"/>
    </location>
</feature>
<feature type="transmembrane region" description="Helical" evidence="3">
    <location>
        <begin position="407"/>
        <end position="428"/>
    </location>
</feature>
<feature type="topological domain" description="Cytoplasmic" evidence="9">
    <location>
        <begin position="429"/>
        <end position="453"/>
    </location>
</feature>
<feature type="transmembrane region" description="Helical" evidence="3">
    <location>
        <begin position="454"/>
        <end position="473"/>
    </location>
</feature>
<feature type="topological domain" description="Lumenal" evidence="9">
    <location>
        <begin position="474"/>
        <end position="705"/>
    </location>
</feature>
<feature type="region of interest" description="Interacts with target acceptor peptide in protein substrate" evidence="1">
    <location>
        <begin position="525"/>
        <end position="527"/>
    </location>
</feature>
<feature type="short sequence motif" description="DXD motif 1" evidence="6">
    <location>
        <begin position="47"/>
        <end position="49"/>
    </location>
</feature>
<feature type="short sequence motif" description="DXD motif 2" evidence="3">
    <location>
        <begin position="167"/>
        <end position="169"/>
    </location>
</feature>
<feature type="short sequence motif" description="SVSE motif" evidence="6">
    <location>
        <begin position="348"/>
        <end position="351"/>
    </location>
</feature>
<feature type="short sequence motif" description="WWDYG motif" evidence="3">
    <location>
        <begin position="525"/>
        <end position="529"/>
    </location>
</feature>
<feature type="short sequence motif" description="DK motif" evidence="3">
    <location>
        <begin position="592"/>
        <end position="599"/>
    </location>
</feature>
<feature type="binding site" evidence="1">
    <location>
        <position position="49"/>
    </location>
    <ligand>
        <name>Mn(2+)</name>
        <dbReference type="ChEBI" id="CHEBI:29035"/>
    </ligand>
</feature>
<feature type="binding site" evidence="1">
    <location>
        <position position="167"/>
    </location>
    <ligand>
        <name>Mn(2+)</name>
        <dbReference type="ChEBI" id="CHEBI:29035"/>
    </ligand>
</feature>
<feature type="binding site" evidence="1">
    <location>
        <position position="169"/>
    </location>
    <ligand>
        <name>Mn(2+)</name>
        <dbReference type="ChEBI" id="CHEBI:29035"/>
    </ligand>
</feature>
<feature type="binding site" evidence="1">
    <location>
        <position position="405"/>
    </location>
    <ligand>
        <name>dolichyl diphosphooligosaccharide</name>
        <dbReference type="ChEBI" id="CHEBI:57570"/>
    </ligand>
</feature>
<feature type="binding site" evidence="1">
    <location>
        <position position="530"/>
    </location>
    <ligand>
        <name>dolichyl diphosphooligosaccharide</name>
        <dbReference type="ChEBI" id="CHEBI:57570"/>
    </ligand>
</feature>
<feature type="site" description="Interacts with target acceptor peptide in protein substrate" evidence="1">
    <location>
        <position position="49"/>
    </location>
</feature>
<feature type="site" description="Important for catalytic activity" evidence="1">
    <location>
        <position position="160"/>
    </location>
</feature>
<feature type="site" description="Interacts with target acceptor peptide in protein substrate" evidence="1">
    <location>
        <position position="351"/>
    </location>
</feature>
<feature type="site" description="Interacts with target acceptor peptide in protein substrate" evidence="1">
    <location>
        <position position="595"/>
    </location>
</feature>
<feature type="glycosylation site" description="N-linked (GlcNAc...) asparagine" evidence="8">
    <location>
        <position position="537"/>
    </location>
</feature>
<feature type="glycosylation site" description="N-linked (GlcNAc...) asparagine" evidence="8">
    <location>
        <position position="544"/>
    </location>
</feature>
<feature type="glycosylation site" description="N-linked (GlcNAc...) (high mannose) asparagine" evidence="3">
    <location>
        <position position="548"/>
    </location>
</feature>